<gene>
    <name evidence="2" type="primary">ears2</name>
</gene>
<protein>
    <recommendedName>
        <fullName evidence="2">Nondiscriminating glutamyl-tRNA synthetase EARS2, mitochondrial</fullName>
        <ecNumber evidence="2">6.1.1.24</ecNumber>
    </recommendedName>
    <alternativeName>
        <fullName>Glutamate--tRNA(Gln) ligase EARS2, mitochondrial</fullName>
        <ecNumber evidence="2">6.1.1.17</ecNumber>
    </alternativeName>
    <alternativeName>
        <fullName>Glutamyl-tRNA synthetase</fullName>
        <shortName>GluRS</shortName>
    </alternativeName>
    <alternativeName>
        <fullName>Mitochondrial glutamyl-tRNA synthetase</fullName>
        <shortName>mtGluRS</shortName>
    </alternativeName>
</protein>
<comment type="function">
    <text evidence="2">Non-discriminating glutamyl-tRNA synthetase that catalyzes aminoacylation of both mitochondrial tRNA(Glu) and tRNA(Gln) and participates in RNA aminoacylation for mitochondrial protein translation. Attachs glutamate to tRNA(Glu) or tRNA(Gln) in a two-step reaction: glutamate is first activated by ATP to form Glu-AMP and then transferred to the acceptor end of tRNA(Glu) or tRNA(Gln).</text>
</comment>
<comment type="catalytic activity">
    <reaction evidence="2">
        <text>tRNA(Glx) + L-glutamate + ATP = L-glutamyl-tRNA(Glx) + AMP + diphosphate</text>
        <dbReference type="Rhea" id="RHEA:18397"/>
        <dbReference type="Rhea" id="RHEA-COMP:9713"/>
        <dbReference type="Rhea" id="RHEA-COMP:9716"/>
        <dbReference type="ChEBI" id="CHEBI:29985"/>
        <dbReference type="ChEBI" id="CHEBI:30616"/>
        <dbReference type="ChEBI" id="CHEBI:33019"/>
        <dbReference type="ChEBI" id="CHEBI:78442"/>
        <dbReference type="ChEBI" id="CHEBI:78520"/>
        <dbReference type="ChEBI" id="CHEBI:456215"/>
        <dbReference type="EC" id="6.1.1.24"/>
    </reaction>
    <physiologicalReaction direction="left-to-right" evidence="2">
        <dbReference type="Rhea" id="RHEA:18398"/>
    </physiologicalReaction>
</comment>
<comment type="catalytic activity">
    <reaction evidence="2">
        <text>tRNA(Glu) + L-glutamate + ATP = L-glutamyl-tRNA(Glu) + AMP + diphosphate</text>
        <dbReference type="Rhea" id="RHEA:23540"/>
        <dbReference type="Rhea" id="RHEA-COMP:9663"/>
        <dbReference type="Rhea" id="RHEA-COMP:9680"/>
        <dbReference type="ChEBI" id="CHEBI:29985"/>
        <dbReference type="ChEBI" id="CHEBI:30616"/>
        <dbReference type="ChEBI" id="CHEBI:33019"/>
        <dbReference type="ChEBI" id="CHEBI:78442"/>
        <dbReference type="ChEBI" id="CHEBI:78520"/>
        <dbReference type="ChEBI" id="CHEBI:456215"/>
        <dbReference type="EC" id="6.1.1.17"/>
    </reaction>
    <physiologicalReaction direction="left-to-right" evidence="2">
        <dbReference type="Rhea" id="RHEA:23541"/>
    </physiologicalReaction>
</comment>
<comment type="catalytic activity">
    <reaction evidence="2">
        <text>tRNA(Gln) + L-glutamate + ATP = L-glutamyl-tRNA(Gln) + AMP + diphosphate</text>
        <dbReference type="Rhea" id="RHEA:64612"/>
        <dbReference type="Rhea" id="RHEA-COMP:9662"/>
        <dbReference type="Rhea" id="RHEA-COMP:9684"/>
        <dbReference type="ChEBI" id="CHEBI:29985"/>
        <dbReference type="ChEBI" id="CHEBI:30616"/>
        <dbReference type="ChEBI" id="CHEBI:33019"/>
        <dbReference type="ChEBI" id="CHEBI:78442"/>
        <dbReference type="ChEBI" id="CHEBI:78520"/>
        <dbReference type="ChEBI" id="CHEBI:456215"/>
    </reaction>
    <physiologicalReaction direction="left-to-right" evidence="2">
        <dbReference type="Rhea" id="RHEA:64613"/>
    </physiologicalReaction>
</comment>
<comment type="subcellular location">
    <subcellularLocation>
        <location evidence="2">Mitochondrion matrix</location>
    </subcellularLocation>
</comment>
<comment type="similarity">
    <text evidence="4">Belongs to the class-I aminoacyl-tRNA synthetase family. Glutamate--tRNA ligase type 1 subfamily.</text>
</comment>
<organism>
    <name type="scientific">Xenopus tropicalis</name>
    <name type="common">Western clawed frog</name>
    <name type="synonym">Silurana tropicalis</name>
    <dbReference type="NCBI Taxonomy" id="8364"/>
    <lineage>
        <taxon>Eukaryota</taxon>
        <taxon>Metazoa</taxon>
        <taxon>Chordata</taxon>
        <taxon>Craniata</taxon>
        <taxon>Vertebrata</taxon>
        <taxon>Euteleostomi</taxon>
        <taxon>Amphibia</taxon>
        <taxon>Batrachia</taxon>
        <taxon>Anura</taxon>
        <taxon>Pipoidea</taxon>
        <taxon>Pipidae</taxon>
        <taxon>Xenopodinae</taxon>
        <taxon>Xenopus</taxon>
        <taxon>Silurana</taxon>
    </lineage>
</organism>
<accession>Q66JG3</accession>
<proteinExistence type="evidence at transcript level"/>
<name>SYEM_XENTR</name>
<keyword id="KW-0030">Aminoacyl-tRNA synthetase</keyword>
<keyword id="KW-0067">ATP-binding</keyword>
<keyword id="KW-0436">Ligase</keyword>
<keyword id="KW-0496">Mitochondrion</keyword>
<keyword id="KW-0547">Nucleotide-binding</keyword>
<keyword id="KW-0648">Protein biosynthesis</keyword>
<keyword id="KW-1185">Reference proteome</keyword>
<keyword id="KW-0694">RNA-binding</keyword>
<keyword id="KW-0809">Transit peptide</keyword>
<reference key="1">
    <citation type="submission" date="2004-08" db="EMBL/GenBank/DDBJ databases">
        <authorList>
            <consortium name="NIH - Xenopus Gene Collection (XGC) project"/>
        </authorList>
    </citation>
    <scope>NUCLEOTIDE SEQUENCE [LARGE SCALE MRNA]</scope>
    <source>
        <tissue>Embryo</tissue>
    </source>
</reference>
<dbReference type="EC" id="6.1.1.24" evidence="2"/>
<dbReference type="EC" id="6.1.1.17" evidence="2"/>
<dbReference type="EMBL" id="BC080925">
    <property type="protein sequence ID" value="AAH80925.1"/>
    <property type="molecule type" value="mRNA"/>
</dbReference>
<dbReference type="RefSeq" id="NP_001008042.1">
    <property type="nucleotide sequence ID" value="NM_001008041.1"/>
</dbReference>
<dbReference type="SMR" id="Q66JG3"/>
<dbReference type="FunCoup" id="Q66JG3">
    <property type="interactions" value="1291"/>
</dbReference>
<dbReference type="STRING" id="8364.ENSXETP00000040409"/>
<dbReference type="PaxDb" id="8364-ENSXETP00000027183"/>
<dbReference type="DNASU" id="493404"/>
<dbReference type="GeneID" id="493404"/>
<dbReference type="KEGG" id="xtr:493404"/>
<dbReference type="AGR" id="Xenbase:XB-GENE-970848"/>
<dbReference type="CTD" id="124454"/>
<dbReference type="Xenbase" id="XB-GENE-970848">
    <property type="gene designation" value="ears2"/>
</dbReference>
<dbReference type="eggNOG" id="KOG1149">
    <property type="taxonomic scope" value="Eukaryota"/>
</dbReference>
<dbReference type="InParanoid" id="Q66JG3"/>
<dbReference type="OMA" id="QAPRYDN"/>
<dbReference type="OrthoDB" id="428822at2759"/>
<dbReference type="Proteomes" id="UP000008143">
    <property type="component" value="Chromosome 9"/>
</dbReference>
<dbReference type="Bgee" id="ENSXETG00000012433">
    <property type="expression patterns" value="Expressed in skeletal muscle tissue and 12 other cell types or tissues"/>
</dbReference>
<dbReference type="GO" id="GO:0005759">
    <property type="term" value="C:mitochondrial matrix"/>
    <property type="evidence" value="ECO:0007669"/>
    <property type="project" value="UniProtKB-SubCell"/>
</dbReference>
<dbReference type="GO" id="GO:0005524">
    <property type="term" value="F:ATP binding"/>
    <property type="evidence" value="ECO:0007669"/>
    <property type="project" value="UniProtKB-KW"/>
</dbReference>
<dbReference type="GO" id="GO:0004818">
    <property type="term" value="F:glutamate-tRNA ligase activity"/>
    <property type="evidence" value="ECO:0007669"/>
    <property type="project" value="UniProtKB-EC"/>
</dbReference>
<dbReference type="GO" id="GO:0050561">
    <property type="term" value="F:glutamate-tRNA(Gln) ligase activity"/>
    <property type="evidence" value="ECO:0007669"/>
    <property type="project" value="RHEA"/>
</dbReference>
<dbReference type="GO" id="GO:0000049">
    <property type="term" value="F:tRNA binding"/>
    <property type="evidence" value="ECO:0007669"/>
    <property type="project" value="InterPro"/>
</dbReference>
<dbReference type="GO" id="GO:0008270">
    <property type="term" value="F:zinc ion binding"/>
    <property type="evidence" value="ECO:0007669"/>
    <property type="project" value="InterPro"/>
</dbReference>
<dbReference type="GO" id="GO:0006424">
    <property type="term" value="P:glutamyl-tRNA aminoacylation"/>
    <property type="evidence" value="ECO:0007669"/>
    <property type="project" value="InterPro"/>
</dbReference>
<dbReference type="CDD" id="cd00808">
    <property type="entry name" value="GluRS_core"/>
    <property type="match status" value="1"/>
</dbReference>
<dbReference type="FunFam" id="3.40.50.620:FF:000045">
    <property type="entry name" value="Glutamate--tRNA ligase, mitochondrial"/>
    <property type="match status" value="1"/>
</dbReference>
<dbReference type="Gene3D" id="1.10.10.350">
    <property type="match status" value="1"/>
</dbReference>
<dbReference type="Gene3D" id="3.40.50.620">
    <property type="entry name" value="HUPs"/>
    <property type="match status" value="1"/>
</dbReference>
<dbReference type="HAMAP" id="MF_00022">
    <property type="entry name" value="Glu_tRNA_synth_type1"/>
    <property type="match status" value="1"/>
</dbReference>
<dbReference type="InterPro" id="IPR045462">
    <property type="entry name" value="aa-tRNA-synth_I_cd-bd"/>
</dbReference>
<dbReference type="InterPro" id="IPR020751">
    <property type="entry name" value="aa-tRNA-synth_I_codon-bd_sub2"/>
</dbReference>
<dbReference type="InterPro" id="IPR001412">
    <property type="entry name" value="aa-tRNA-synth_I_CS"/>
</dbReference>
<dbReference type="InterPro" id="IPR008925">
    <property type="entry name" value="aa_tRNA-synth_I_cd-bd_sf"/>
</dbReference>
<dbReference type="InterPro" id="IPR004527">
    <property type="entry name" value="Glu-tRNA-ligase_bac/mito"/>
</dbReference>
<dbReference type="InterPro" id="IPR000924">
    <property type="entry name" value="Glu/Gln-tRNA-synth"/>
</dbReference>
<dbReference type="InterPro" id="IPR020058">
    <property type="entry name" value="Glu/Gln-tRNA-synth_Ib_cat-dom"/>
</dbReference>
<dbReference type="InterPro" id="IPR049940">
    <property type="entry name" value="GluQ/Sye"/>
</dbReference>
<dbReference type="InterPro" id="IPR033910">
    <property type="entry name" value="GluRS_core"/>
</dbReference>
<dbReference type="InterPro" id="IPR014729">
    <property type="entry name" value="Rossmann-like_a/b/a_fold"/>
</dbReference>
<dbReference type="NCBIfam" id="TIGR00464">
    <property type="entry name" value="gltX_bact"/>
    <property type="match status" value="1"/>
</dbReference>
<dbReference type="PANTHER" id="PTHR43311">
    <property type="entry name" value="GLUTAMATE--TRNA LIGASE"/>
    <property type="match status" value="1"/>
</dbReference>
<dbReference type="PANTHER" id="PTHR43311:SF2">
    <property type="entry name" value="GLUTAMATE--TRNA LIGASE, MITOCHONDRIAL-RELATED"/>
    <property type="match status" value="1"/>
</dbReference>
<dbReference type="Pfam" id="PF19269">
    <property type="entry name" value="Anticodon_2"/>
    <property type="match status" value="1"/>
</dbReference>
<dbReference type="Pfam" id="PF00749">
    <property type="entry name" value="tRNA-synt_1c"/>
    <property type="match status" value="1"/>
</dbReference>
<dbReference type="PRINTS" id="PR00987">
    <property type="entry name" value="TRNASYNTHGLU"/>
</dbReference>
<dbReference type="SUPFAM" id="SSF48163">
    <property type="entry name" value="An anticodon-binding domain of class I aminoacyl-tRNA synthetases"/>
    <property type="match status" value="1"/>
</dbReference>
<dbReference type="SUPFAM" id="SSF52374">
    <property type="entry name" value="Nucleotidylyl transferase"/>
    <property type="match status" value="1"/>
</dbReference>
<dbReference type="PROSITE" id="PS00178">
    <property type="entry name" value="AA_TRNA_LIGASE_I"/>
    <property type="match status" value="1"/>
</dbReference>
<evidence type="ECO:0000250" key="1"/>
<evidence type="ECO:0000250" key="2">
    <source>
        <dbReference type="UniProtKB" id="Q5JPH6"/>
    </source>
</evidence>
<evidence type="ECO:0000255" key="3"/>
<evidence type="ECO:0000305" key="4"/>
<sequence length="516" mass="58607">MRPAFIRGKWLSRTLELATGLGRRTCSSRESGREVRVRFAPSPTGFLHLGGLRTALYNYLFAKKHGGAFILRLEDTDRSRLVPGAAESIEDMLEWAGIPPDESPRHGGPCGPYEQSKRLDLYHVAAQALLDSGAAYRCFCTPQRLELLKREAMRNRQTPRYDNRCRHLTPKQVEEKLSRNSPFVIRFFLQEGAQPFQDLVYGWTQHDVASVEGDPVILKGDGFPTYHLANVVDDHHMCVSHVLRGAEWLISTAKHLLLYQALGWQPPQFAHLPLLLNKDGSKLSKRQGDIFIQHYVHSGYLSDALLDLITNCGSGFTENQMGRTVDTLIQQYELGKTSTHSALLDLDKLPEFNRIHLTRWIEGTETRVQLVGQLQVLLKDTYKDLELDEKHIERILLLRKGHLCRLTDLLSPEYSYLWVRPSVTREQLQCLTSEASKVKNLVVRLLQENDSGFTLETLNGELRKQLKQVKDTKYSSAMKLLRVALSGQEHGPSVAEMLLSLGRQESIVRLQNALPD</sequence>
<feature type="transit peptide" description="Mitochondrion" evidence="3">
    <location>
        <begin position="1"/>
        <end position="39"/>
    </location>
</feature>
<feature type="chain" id="PRO_0000254565" description="Nondiscriminating glutamyl-tRNA synthetase EARS2, mitochondrial">
    <location>
        <begin position="40"/>
        <end position="516"/>
    </location>
</feature>
<feature type="short sequence motif" description="'HIGH' region">
    <location>
        <begin position="43"/>
        <end position="51"/>
    </location>
</feature>
<feature type="short sequence motif" description="'KMSKS' region">
    <location>
        <begin position="282"/>
        <end position="286"/>
    </location>
</feature>
<feature type="binding site" evidence="1">
    <location>
        <begin position="38"/>
        <end position="40"/>
    </location>
    <ligand>
        <name>L-glutamate</name>
        <dbReference type="ChEBI" id="CHEBI:29985"/>
    </ligand>
</feature>
<feature type="binding site" evidence="1">
    <location>
        <position position="48"/>
    </location>
    <ligand>
        <name>ATP</name>
        <dbReference type="ChEBI" id="CHEBI:30616"/>
    </ligand>
</feature>
<feature type="binding site" evidence="1">
    <location>
        <position position="74"/>
    </location>
    <ligand>
        <name>L-glutamate</name>
        <dbReference type="ChEBI" id="CHEBI:29985"/>
    </ligand>
</feature>
<feature type="binding site" evidence="1">
    <location>
        <begin position="226"/>
        <end position="230"/>
    </location>
    <ligand>
        <name>L-glutamate</name>
        <dbReference type="ChEBI" id="CHEBI:29985"/>
    </ligand>
</feature>
<feature type="binding site" evidence="1">
    <location>
        <position position="244"/>
    </location>
    <ligand>
        <name>L-glutamate</name>
        <dbReference type="ChEBI" id="CHEBI:29985"/>
    </ligand>
</feature>
<feature type="binding site" evidence="1">
    <location>
        <position position="247"/>
    </location>
    <ligand>
        <name>ATP</name>
        <dbReference type="ChEBI" id="CHEBI:30616"/>
    </ligand>
</feature>
<feature type="binding site" evidence="1">
    <location>
        <begin position="282"/>
        <end position="286"/>
    </location>
    <ligand>
        <name>ATP</name>
        <dbReference type="ChEBI" id="CHEBI:30616"/>
    </ligand>
</feature>